<keyword id="KW-0249">Electron transport</keyword>
<keyword id="KW-0472">Membrane</keyword>
<keyword id="KW-0496">Mitochondrion</keyword>
<keyword id="KW-0520">NAD</keyword>
<keyword id="KW-0679">Respiratory chain</keyword>
<keyword id="KW-1278">Translocase</keyword>
<keyword id="KW-0812">Transmembrane</keyword>
<keyword id="KW-1133">Transmembrane helix</keyword>
<keyword id="KW-0813">Transport</keyword>
<keyword id="KW-0830">Ubiquinone</keyword>
<feature type="chain" id="PRO_0000117916" description="NADH-ubiquinone oxidoreductase chain 4">
    <location>
        <begin position="1" status="less than"/>
        <end position="231" status="greater than"/>
    </location>
</feature>
<feature type="transmembrane region" description="Helical" evidence="2">
    <location>
        <begin position="1"/>
        <end position="21"/>
    </location>
</feature>
<feature type="transmembrane region" description="Helical" evidence="2">
    <location>
        <begin position="34"/>
        <end position="54"/>
    </location>
</feature>
<feature type="transmembrane region" description="Helical" evidence="2">
    <location>
        <begin position="62"/>
        <end position="82"/>
    </location>
</feature>
<feature type="transmembrane region" description="Helical" evidence="2">
    <location>
        <begin position="86"/>
        <end position="106"/>
    </location>
</feature>
<feature type="transmembrane region" description="Helical" evidence="2">
    <location>
        <begin position="118"/>
        <end position="138"/>
    </location>
</feature>
<feature type="transmembrane region" description="Helical" evidence="2">
    <location>
        <begin position="169"/>
        <end position="189"/>
    </location>
</feature>
<feature type="transmembrane region" description="Helical" evidence="2">
    <location>
        <begin position="211"/>
        <end position="231"/>
    </location>
</feature>
<feature type="non-terminal residue">
    <location>
        <position position="1"/>
    </location>
</feature>
<feature type="non-terminal residue">
    <location>
        <position position="231"/>
    </location>
</feature>
<organism>
    <name type="scientific">Causus rhombeatus</name>
    <name type="common">Rhombic night adder</name>
    <dbReference type="NCBI Taxonomy" id="44735"/>
    <lineage>
        <taxon>Eukaryota</taxon>
        <taxon>Metazoa</taxon>
        <taxon>Chordata</taxon>
        <taxon>Craniata</taxon>
        <taxon>Vertebrata</taxon>
        <taxon>Euteleostomi</taxon>
        <taxon>Lepidosauria</taxon>
        <taxon>Squamata</taxon>
        <taxon>Bifurcata</taxon>
        <taxon>Unidentata</taxon>
        <taxon>Episquamata</taxon>
        <taxon>Toxicofera</taxon>
        <taxon>Serpentes</taxon>
        <taxon>Colubroidea</taxon>
        <taxon>Viperidae</taxon>
        <taxon>Viperinae</taxon>
        <taxon>Causus</taxon>
    </lineage>
</organism>
<gene>
    <name type="primary">MT-ND4</name>
    <name type="synonym">MTND4</name>
    <name type="synonym">NADH4</name>
    <name type="synonym">ND4</name>
</gene>
<evidence type="ECO:0000250" key="1"/>
<evidence type="ECO:0000255" key="2"/>
<evidence type="ECO:0000305" key="3"/>
<protein>
    <recommendedName>
        <fullName>NADH-ubiquinone oxidoreductase chain 4</fullName>
        <ecNumber>7.1.1.2</ecNumber>
    </recommendedName>
    <alternativeName>
        <fullName>NADH dehydrogenase subunit 4</fullName>
    </alternativeName>
</protein>
<name>NU4M_CAURH</name>
<accession>O03707</accession>
<sequence>PIAGSMVLAAILLKLGGYGMIRIIQILPSSKTDMFIPFITLSLWGAVLANLTCLQQTDLKSLIAYSSISHMGLVVAAISIQTQWSLSGAMALMIAHGFTSSALFCLANTSYERTHTRILILTRGFHNILPMTTTWWLLSNLMNIATPPMMNFTSEFLILSSLFNWCPTTIILLSLSILITSIYSLHIFLSTQMGPTLLNTQTEPAHSREHLLMTLHIIPLILLSMKPELVM</sequence>
<comment type="function">
    <text evidence="1">Core subunit of the mitochondrial membrane respiratory chain NADH dehydrogenase (Complex I) that is believed to belong to the minimal assembly required for catalysis. Complex I functions in the transfer of electrons from NADH to the respiratory chain. The immediate electron acceptor for the enzyme is believed to be ubiquinone (By similarity).</text>
</comment>
<comment type="catalytic activity">
    <reaction>
        <text>a ubiquinone + NADH + 5 H(+)(in) = a ubiquinol + NAD(+) + 4 H(+)(out)</text>
        <dbReference type="Rhea" id="RHEA:29091"/>
        <dbReference type="Rhea" id="RHEA-COMP:9565"/>
        <dbReference type="Rhea" id="RHEA-COMP:9566"/>
        <dbReference type="ChEBI" id="CHEBI:15378"/>
        <dbReference type="ChEBI" id="CHEBI:16389"/>
        <dbReference type="ChEBI" id="CHEBI:17976"/>
        <dbReference type="ChEBI" id="CHEBI:57540"/>
        <dbReference type="ChEBI" id="CHEBI:57945"/>
        <dbReference type="EC" id="7.1.1.2"/>
    </reaction>
</comment>
<comment type="subcellular location">
    <subcellularLocation>
        <location evidence="1">Mitochondrion membrane</location>
        <topology evidence="1">Multi-pass membrane protein</topology>
    </subcellularLocation>
</comment>
<comment type="similarity">
    <text evidence="3">Belongs to the complex I subunit 4 family.</text>
</comment>
<dbReference type="EC" id="7.1.1.2"/>
<dbReference type="EMBL" id="U41866">
    <property type="protein sequence ID" value="AAC27819.1"/>
    <property type="molecule type" value="Genomic_DNA"/>
</dbReference>
<dbReference type="SMR" id="O03707"/>
<dbReference type="GO" id="GO:0031966">
    <property type="term" value="C:mitochondrial membrane"/>
    <property type="evidence" value="ECO:0007669"/>
    <property type="project" value="UniProtKB-SubCell"/>
</dbReference>
<dbReference type="GO" id="GO:0008137">
    <property type="term" value="F:NADH dehydrogenase (ubiquinone) activity"/>
    <property type="evidence" value="ECO:0007669"/>
    <property type="project" value="UniProtKB-EC"/>
</dbReference>
<dbReference type="GO" id="GO:0048039">
    <property type="term" value="F:ubiquinone binding"/>
    <property type="evidence" value="ECO:0007669"/>
    <property type="project" value="TreeGrafter"/>
</dbReference>
<dbReference type="GO" id="GO:0042773">
    <property type="term" value="P:ATP synthesis coupled electron transport"/>
    <property type="evidence" value="ECO:0007669"/>
    <property type="project" value="InterPro"/>
</dbReference>
<dbReference type="GO" id="GO:0015990">
    <property type="term" value="P:electron transport coupled proton transport"/>
    <property type="evidence" value="ECO:0007669"/>
    <property type="project" value="TreeGrafter"/>
</dbReference>
<dbReference type="InterPro" id="IPR003918">
    <property type="entry name" value="NADH_UbQ_OxRdtase"/>
</dbReference>
<dbReference type="InterPro" id="IPR001750">
    <property type="entry name" value="ND/Mrp_TM"/>
</dbReference>
<dbReference type="PANTHER" id="PTHR43507">
    <property type="entry name" value="NADH-UBIQUINONE OXIDOREDUCTASE CHAIN 4"/>
    <property type="match status" value="1"/>
</dbReference>
<dbReference type="PANTHER" id="PTHR43507:SF20">
    <property type="entry name" value="NADH-UBIQUINONE OXIDOREDUCTASE CHAIN 4"/>
    <property type="match status" value="1"/>
</dbReference>
<dbReference type="Pfam" id="PF00361">
    <property type="entry name" value="Proton_antipo_M"/>
    <property type="match status" value="1"/>
</dbReference>
<dbReference type="PRINTS" id="PR01437">
    <property type="entry name" value="NUOXDRDTASE4"/>
</dbReference>
<geneLocation type="mitochondrion"/>
<proteinExistence type="inferred from homology"/>
<reference key="1">
    <citation type="journal article" date="1996" name="Copeia">
        <title>Crotaline intergeneric relationships based on mitochondrial DNA sequence data.</title>
        <authorList>
            <person name="Kraus F."/>
            <person name="Mink D.G."/>
            <person name="Brown W.M."/>
        </authorList>
    </citation>
    <scope>NUCLEOTIDE SEQUENCE [GENOMIC DNA]</scope>
</reference>